<reference key="1">
    <citation type="journal article" date="2009" name="PLoS Genet.">
        <title>Organised genome dynamics in the Escherichia coli species results in highly diverse adaptive paths.</title>
        <authorList>
            <person name="Touchon M."/>
            <person name="Hoede C."/>
            <person name="Tenaillon O."/>
            <person name="Barbe V."/>
            <person name="Baeriswyl S."/>
            <person name="Bidet P."/>
            <person name="Bingen E."/>
            <person name="Bonacorsi S."/>
            <person name="Bouchier C."/>
            <person name="Bouvet O."/>
            <person name="Calteau A."/>
            <person name="Chiapello H."/>
            <person name="Clermont O."/>
            <person name="Cruveiller S."/>
            <person name="Danchin A."/>
            <person name="Diard M."/>
            <person name="Dossat C."/>
            <person name="Karoui M.E."/>
            <person name="Frapy E."/>
            <person name="Garry L."/>
            <person name="Ghigo J.M."/>
            <person name="Gilles A.M."/>
            <person name="Johnson J."/>
            <person name="Le Bouguenec C."/>
            <person name="Lescat M."/>
            <person name="Mangenot S."/>
            <person name="Martinez-Jehanne V."/>
            <person name="Matic I."/>
            <person name="Nassif X."/>
            <person name="Oztas S."/>
            <person name="Petit M.A."/>
            <person name="Pichon C."/>
            <person name="Rouy Z."/>
            <person name="Ruf C.S."/>
            <person name="Schneider D."/>
            <person name="Tourret J."/>
            <person name="Vacherie B."/>
            <person name="Vallenet D."/>
            <person name="Medigue C."/>
            <person name="Rocha E.P.C."/>
            <person name="Denamur E."/>
        </authorList>
    </citation>
    <scope>NUCLEOTIDE SEQUENCE [LARGE SCALE GENOMIC DNA]</scope>
    <source>
        <strain>S88 / ExPEC</strain>
    </source>
</reference>
<keyword id="KW-0106">Calcium</keyword>
<keyword id="KW-0131">Cell cycle</keyword>
<keyword id="KW-0132">Cell division</keyword>
<keyword id="KW-0159">Chromosome partition</keyword>
<keyword id="KW-0963">Cytoplasm</keyword>
<keyword id="KW-0226">DNA condensation</keyword>
<keyword id="KW-1185">Reference proteome</keyword>
<comment type="function">
    <text evidence="1">Involved in chromosome condensation, segregation and cell cycle progression. May participate in facilitating chromosome segregation by condensation DNA from both sides of a centrally located replisome during cell division. Not required for mini-F plasmid partitioning. Probably acts via its interaction with MukB and MukE. Overexpression results in anucleate cells. It has a calcium binding activity.</text>
</comment>
<comment type="subunit">
    <text evidence="1">Interacts, and probably forms a ternary complex, with MukE and MukB via its C-terminal region. The complex formation is stimulated by calcium or magnesium. It is required for an interaction between MukE and MukB.</text>
</comment>
<comment type="subcellular location">
    <subcellularLocation>
        <location evidence="1">Cytoplasm</location>
        <location evidence="1">Nucleoid</location>
    </subcellularLocation>
    <text evidence="1">Restricted to the nucleoid region.</text>
</comment>
<comment type="similarity">
    <text evidence="1">Belongs to the MukF family.</text>
</comment>
<gene>
    <name evidence="1" type="primary">mukF</name>
    <name type="ordered locus">ECS88_0950</name>
</gene>
<dbReference type="EMBL" id="CU928161">
    <property type="protein sequence ID" value="CAR02282.1"/>
    <property type="molecule type" value="Genomic_DNA"/>
</dbReference>
<dbReference type="RefSeq" id="WP_001288856.1">
    <property type="nucleotide sequence ID" value="NC_011742.1"/>
</dbReference>
<dbReference type="SMR" id="B7MHN1"/>
<dbReference type="KEGG" id="ecz:ECS88_0950"/>
<dbReference type="HOGENOM" id="CLU_049853_0_0_6"/>
<dbReference type="Proteomes" id="UP000000747">
    <property type="component" value="Chromosome"/>
</dbReference>
<dbReference type="GO" id="GO:0005737">
    <property type="term" value="C:cytoplasm"/>
    <property type="evidence" value="ECO:0007669"/>
    <property type="project" value="UniProtKB-UniRule"/>
</dbReference>
<dbReference type="GO" id="GO:0009295">
    <property type="term" value="C:nucleoid"/>
    <property type="evidence" value="ECO:0007669"/>
    <property type="project" value="UniProtKB-SubCell"/>
</dbReference>
<dbReference type="GO" id="GO:0005509">
    <property type="term" value="F:calcium ion binding"/>
    <property type="evidence" value="ECO:0007669"/>
    <property type="project" value="UniProtKB-UniRule"/>
</dbReference>
<dbReference type="GO" id="GO:0051301">
    <property type="term" value="P:cell division"/>
    <property type="evidence" value="ECO:0007669"/>
    <property type="project" value="UniProtKB-KW"/>
</dbReference>
<dbReference type="GO" id="GO:0030261">
    <property type="term" value="P:chromosome condensation"/>
    <property type="evidence" value="ECO:0007669"/>
    <property type="project" value="UniProtKB-KW"/>
</dbReference>
<dbReference type="GO" id="GO:0007059">
    <property type="term" value="P:chromosome segregation"/>
    <property type="evidence" value="ECO:0007669"/>
    <property type="project" value="UniProtKB-UniRule"/>
</dbReference>
<dbReference type="GO" id="GO:0006260">
    <property type="term" value="P:DNA replication"/>
    <property type="evidence" value="ECO:0007669"/>
    <property type="project" value="UniProtKB-UniRule"/>
</dbReference>
<dbReference type="CDD" id="cd16337">
    <property type="entry name" value="MukF_C"/>
    <property type="match status" value="1"/>
</dbReference>
<dbReference type="CDD" id="cd16335">
    <property type="entry name" value="MukF_N"/>
    <property type="match status" value="1"/>
</dbReference>
<dbReference type="Gene3D" id="1.20.58.590">
    <property type="entry name" value="Chromosome partition protein MukF, middle domain"/>
    <property type="match status" value="1"/>
</dbReference>
<dbReference type="Gene3D" id="1.10.225.40">
    <property type="entry name" value="MukF, C-terminal domain"/>
    <property type="match status" value="1"/>
</dbReference>
<dbReference type="Gene3D" id="1.10.10.10">
    <property type="entry name" value="Winged helix-like DNA-binding domain superfamily/Winged helix DNA-binding domain"/>
    <property type="match status" value="1"/>
</dbReference>
<dbReference type="HAMAP" id="MF_01803">
    <property type="entry name" value="MukF"/>
    <property type="match status" value="1"/>
</dbReference>
<dbReference type="InterPro" id="IPR005582">
    <property type="entry name" value="Chromosome_partition_MukF"/>
</dbReference>
<dbReference type="InterPro" id="IPR033441">
    <property type="entry name" value="MukF_C"/>
</dbReference>
<dbReference type="InterPro" id="IPR038198">
    <property type="entry name" value="MukF_C_sf"/>
</dbReference>
<dbReference type="InterPro" id="IPR033440">
    <property type="entry name" value="MukF_M"/>
</dbReference>
<dbReference type="InterPro" id="IPR036141">
    <property type="entry name" value="MukF_M_sp"/>
</dbReference>
<dbReference type="InterPro" id="IPR033439">
    <property type="entry name" value="MukF_WHTH"/>
</dbReference>
<dbReference type="InterPro" id="IPR036388">
    <property type="entry name" value="WH-like_DNA-bd_sf"/>
</dbReference>
<dbReference type="InterPro" id="IPR036390">
    <property type="entry name" value="WH_DNA-bd_sf"/>
</dbReference>
<dbReference type="NCBIfam" id="NF003615">
    <property type="entry name" value="PRK05260.1"/>
    <property type="match status" value="1"/>
</dbReference>
<dbReference type="Pfam" id="PF03882">
    <property type="entry name" value="KicB"/>
    <property type="match status" value="1"/>
</dbReference>
<dbReference type="Pfam" id="PF17193">
    <property type="entry name" value="MukF_C"/>
    <property type="match status" value="1"/>
</dbReference>
<dbReference type="Pfam" id="PF17192">
    <property type="entry name" value="MukF_M"/>
    <property type="match status" value="1"/>
</dbReference>
<dbReference type="PIRSF" id="PIRSF018282">
    <property type="entry name" value="MukF"/>
    <property type="match status" value="1"/>
</dbReference>
<dbReference type="SUPFAM" id="SSF140570">
    <property type="entry name" value="MukF C-terminal domain-like"/>
    <property type="match status" value="1"/>
</dbReference>
<dbReference type="SUPFAM" id="SSF46785">
    <property type="entry name" value="Winged helix' DNA-binding domain"/>
    <property type="match status" value="1"/>
</dbReference>
<evidence type="ECO:0000255" key="1">
    <source>
        <dbReference type="HAMAP-Rule" id="MF_01803"/>
    </source>
</evidence>
<proteinExistence type="inferred from homology"/>
<accession>B7MHN1</accession>
<feature type="chain" id="PRO_1000187499" description="Chromosome partition protein MukF">
    <location>
        <begin position="1"/>
        <end position="440"/>
    </location>
</feature>
<feature type="region of interest" description="Leucine-zipper">
    <location>
        <begin position="208"/>
        <end position="236"/>
    </location>
</feature>
<protein>
    <recommendedName>
        <fullName evidence="1">Chromosome partition protein MukF</fullName>
    </recommendedName>
</protein>
<sequence length="440" mass="50607">MSEFSQTVPELVAWARKNDFSISLPVDRLSFLLAVATLNGERLDGEMSEGELVDAFRHVSDAFEQTSETIGVRANNAINDMVRQRLLNRFTSEQAEGNAIYRLTPLGIGITDYYIRQREFSTLRLSMQLSIVAGELKRAADAAEEGGDEFHWHRNVYAPLKYSVAEIFDSIDLTQRLMDEQQQQVKDDIAQLLNKDWRAAISSCELLLSETSGTLRELQDTLEAAGDKLQANLLRIQDATMTHDDLHFVDRLVFDLQSKLDRIISWGQQSIDLWIGYDRHVHKFIRTAIDMDKNRVFAQRLRQSVQTYFDEPWALTYANADRLLDMRDEEMVLRDEEVTGELPEDLEYEEFNEIREQLAAIIEEQLAVYKTRQVPLDLGLVVREYLSQYPRARHFDVARIVIDQAVRLGVAQADFTGLPAKWQPINDYGAKVQAHVIDKY</sequence>
<name>MUKF_ECO45</name>
<organism>
    <name type="scientific">Escherichia coli O45:K1 (strain S88 / ExPEC)</name>
    <dbReference type="NCBI Taxonomy" id="585035"/>
    <lineage>
        <taxon>Bacteria</taxon>
        <taxon>Pseudomonadati</taxon>
        <taxon>Pseudomonadota</taxon>
        <taxon>Gammaproteobacteria</taxon>
        <taxon>Enterobacterales</taxon>
        <taxon>Enterobacteriaceae</taxon>
        <taxon>Escherichia</taxon>
    </lineage>
</organism>